<feature type="chain" id="PRO_0000160005" description="Superoxide dismutase [Mn/Fe]">
    <location>
        <begin position="1"/>
        <end position="214"/>
    </location>
</feature>
<feature type="binding site" evidence="1">
    <location>
        <position position="31"/>
    </location>
    <ligand>
        <name>Fe(3+)</name>
        <dbReference type="ChEBI" id="CHEBI:29034"/>
    </ligand>
</feature>
<feature type="binding site" evidence="1">
    <location>
        <position position="31"/>
    </location>
    <ligand>
        <name>Mn(2+)</name>
        <dbReference type="ChEBI" id="CHEBI:29035"/>
    </ligand>
</feature>
<feature type="binding site" evidence="1">
    <location>
        <position position="79"/>
    </location>
    <ligand>
        <name>Fe(3+)</name>
        <dbReference type="ChEBI" id="CHEBI:29034"/>
    </ligand>
</feature>
<feature type="binding site" evidence="1">
    <location>
        <position position="79"/>
    </location>
    <ligand>
        <name>Mn(2+)</name>
        <dbReference type="ChEBI" id="CHEBI:29035"/>
    </ligand>
</feature>
<feature type="binding site" evidence="1">
    <location>
        <position position="165"/>
    </location>
    <ligand>
        <name>Fe(3+)</name>
        <dbReference type="ChEBI" id="CHEBI:29034"/>
    </ligand>
</feature>
<feature type="binding site" evidence="1">
    <location>
        <position position="165"/>
    </location>
    <ligand>
        <name>Mn(2+)</name>
        <dbReference type="ChEBI" id="CHEBI:29035"/>
    </ligand>
</feature>
<feature type="binding site" evidence="1">
    <location>
        <position position="169"/>
    </location>
    <ligand>
        <name>Fe(3+)</name>
        <dbReference type="ChEBI" id="CHEBI:29034"/>
    </ligand>
</feature>
<feature type="binding site" evidence="1">
    <location>
        <position position="169"/>
    </location>
    <ligand>
        <name>Mn(2+)</name>
        <dbReference type="ChEBI" id="CHEBI:29035"/>
    </ligand>
</feature>
<feature type="turn" evidence="3">
    <location>
        <begin position="16"/>
        <end position="22"/>
    </location>
</feature>
<feature type="helix" evidence="3">
    <location>
        <begin position="25"/>
        <end position="33"/>
    </location>
</feature>
<feature type="helix" evidence="3">
    <location>
        <begin position="35"/>
        <end position="54"/>
    </location>
</feature>
<feature type="helix" evidence="3">
    <location>
        <begin position="62"/>
        <end position="82"/>
    </location>
</feature>
<feature type="turn" evidence="3">
    <location>
        <begin position="83"/>
        <end position="85"/>
    </location>
</feature>
<feature type="strand" evidence="3">
    <location>
        <begin position="92"/>
        <end position="94"/>
    </location>
</feature>
<feature type="helix" evidence="3">
    <location>
        <begin position="98"/>
        <end position="108"/>
    </location>
</feature>
<feature type="helix" evidence="3">
    <location>
        <begin position="111"/>
        <end position="123"/>
    </location>
</feature>
<feature type="strand" evidence="3">
    <location>
        <begin position="126"/>
        <end position="136"/>
    </location>
</feature>
<feature type="turn" evidence="3">
    <location>
        <begin position="137"/>
        <end position="140"/>
    </location>
</feature>
<feature type="strand" evidence="3">
    <location>
        <begin position="141"/>
        <end position="148"/>
    </location>
</feature>
<feature type="turn" evidence="3">
    <location>
        <begin position="149"/>
        <end position="151"/>
    </location>
</feature>
<feature type="strand" evidence="3">
    <location>
        <begin position="159"/>
        <end position="165"/>
    </location>
</feature>
<feature type="helix" evidence="3">
    <location>
        <begin position="168"/>
        <end position="170"/>
    </location>
</feature>
<feature type="helix" evidence="3">
    <location>
        <begin position="172"/>
        <end position="175"/>
    </location>
</feature>
<feature type="helix" evidence="3">
    <location>
        <begin position="179"/>
        <end position="186"/>
    </location>
</feature>
<feature type="helix" evidence="3">
    <location>
        <begin position="187"/>
        <end position="189"/>
    </location>
</feature>
<feature type="helix" evidence="3">
    <location>
        <begin position="192"/>
        <end position="205"/>
    </location>
</feature>
<feature type="helix" evidence="3">
    <location>
        <begin position="207"/>
        <end position="209"/>
    </location>
</feature>
<reference key="1">
    <citation type="journal article" date="1999" name="J. Biochem.">
        <title>A cambialistic SOD in a strictly aerobic hyperthermophilic archaeon, Aeropyrum pernix.</title>
        <authorList>
            <person name="Yamano S."/>
            <person name="Sako Y."/>
            <person name="Nomura N."/>
            <person name="Maruyama T."/>
        </authorList>
    </citation>
    <scope>NUCLEOTIDE SEQUENCE [GENOMIC DNA]</scope>
    <source>
        <strain>ATCC 700893 / DSM 11879 / JCM 9820 / NBRC 100138 / K1</strain>
    </source>
</reference>
<reference key="2">
    <citation type="journal article" date="1999" name="DNA Res.">
        <title>Complete genome sequence of an aerobic hyper-thermophilic crenarchaeon, Aeropyrum pernix K1.</title>
        <authorList>
            <person name="Kawarabayasi Y."/>
            <person name="Hino Y."/>
            <person name="Horikawa H."/>
            <person name="Yamazaki S."/>
            <person name="Haikawa Y."/>
            <person name="Jin-no K."/>
            <person name="Takahashi M."/>
            <person name="Sekine M."/>
            <person name="Baba S."/>
            <person name="Ankai A."/>
            <person name="Kosugi H."/>
            <person name="Hosoyama A."/>
            <person name="Fukui S."/>
            <person name="Nagai Y."/>
            <person name="Nishijima K."/>
            <person name="Nakazawa H."/>
            <person name="Takamiya M."/>
            <person name="Masuda S."/>
            <person name="Funahashi T."/>
            <person name="Tanaka T."/>
            <person name="Kudoh Y."/>
            <person name="Yamazaki J."/>
            <person name="Kushida N."/>
            <person name="Oguchi A."/>
            <person name="Aoki K."/>
            <person name="Kubota K."/>
            <person name="Nakamura Y."/>
            <person name="Nomura N."/>
            <person name="Sako Y."/>
            <person name="Kikuchi H."/>
        </authorList>
    </citation>
    <scope>NUCLEOTIDE SEQUENCE [LARGE SCALE GENOMIC DNA]</scope>
    <source>
        <strain>ATCC 700893 / DSM 11879 / JCM 9820 / NBRC 100138 / K1</strain>
    </source>
</reference>
<evidence type="ECO:0000250" key="1">
    <source>
        <dbReference type="UniProtKB" id="P80293"/>
    </source>
</evidence>
<evidence type="ECO:0000305" key="2"/>
<evidence type="ECO:0007829" key="3">
    <source>
        <dbReference type="PDB" id="3AK2"/>
    </source>
</evidence>
<organism>
    <name type="scientific">Aeropyrum pernix (strain ATCC 700893 / DSM 11879 / JCM 9820 / NBRC 100138 / K1)</name>
    <dbReference type="NCBI Taxonomy" id="272557"/>
    <lineage>
        <taxon>Archaea</taxon>
        <taxon>Thermoproteota</taxon>
        <taxon>Thermoprotei</taxon>
        <taxon>Desulfurococcales</taxon>
        <taxon>Desulfurococcaceae</taxon>
        <taxon>Aeropyrum</taxon>
    </lineage>
</organism>
<dbReference type="EC" id="1.15.1.1" evidence="1"/>
<dbReference type="EMBL" id="AB012621">
    <property type="protein sequence ID" value="BAA76442.1"/>
    <property type="molecule type" value="Genomic_DNA"/>
</dbReference>
<dbReference type="EMBL" id="BA000002">
    <property type="protein sequence ID" value="BAA79718.1"/>
    <property type="molecule type" value="Genomic_DNA"/>
</dbReference>
<dbReference type="PIR" id="F72664">
    <property type="entry name" value="F72664"/>
</dbReference>
<dbReference type="RefSeq" id="WP_010865944.1">
    <property type="nucleotide sequence ID" value="NC_000854.2"/>
</dbReference>
<dbReference type="PDB" id="3AK1">
    <property type="method" value="X-ray"/>
    <property type="resolution" value="1.57 A"/>
    <property type="chains" value="A/B/C/D=1-214"/>
</dbReference>
<dbReference type="PDB" id="3AK2">
    <property type="method" value="X-ray"/>
    <property type="resolution" value="1.35 A"/>
    <property type="chains" value="A/B/C/D=1-214"/>
</dbReference>
<dbReference type="PDB" id="3AK3">
    <property type="method" value="X-ray"/>
    <property type="resolution" value="1.48 A"/>
    <property type="chains" value="A/B/C/D=1-214"/>
</dbReference>
<dbReference type="PDBsum" id="3AK1"/>
<dbReference type="PDBsum" id="3AK2"/>
<dbReference type="PDBsum" id="3AK3"/>
<dbReference type="SMR" id="Q9Y8H8"/>
<dbReference type="MINT" id="Q9Y8H8"/>
<dbReference type="STRING" id="272557.APE_0741"/>
<dbReference type="EnsemblBacteria" id="BAA79718">
    <property type="protein sequence ID" value="BAA79718"/>
    <property type="gene ID" value="APE_0741"/>
</dbReference>
<dbReference type="GeneID" id="1444865"/>
<dbReference type="KEGG" id="ape:APE_0741"/>
<dbReference type="PATRIC" id="fig|272557.25.peg.534"/>
<dbReference type="eggNOG" id="arCOG04147">
    <property type="taxonomic scope" value="Archaea"/>
</dbReference>
<dbReference type="BRENDA" id="1.15.1.1">
    <property type="organism ID" value="171"/>
</dbReference>
<dbReference type="EvolutionaryTrace" id="Q9Y8H8"/>
<dbReference type="Proteomes" id="UP000002518">
    <property type="component" value="Chromosome"/>
</dbReference>
<dbReference type="GO" id="GO:0042802">
    <property type="term" value="F:identical protein binding"/>
    <property type="evidence" value="ECO:0000353"/>
    <property type="project" value="IntAct"/>
</dbReference>
<dbReference type="GO" id="GO:0046872">
    <property type="term" value="F:metal ion binding"/>
    <property type="evidence" value="ECO:0007669"/>
    <property type="project" value="UniProtKB-KW"/>
</dbReference>
<dbReference type="GO" id="GO:0004784">
    <property type="term" value="F:superoxide dismutase activity"/>
    <property type="evidence" value="ECO:0007669"/>
    <property type="project" value="UniProtKB-EC"/>
</dbReference>
<dbReference type="FunFam" id="1.10.287.990:FF:000001">
    <property type="entry name" value="Superoxide dismutase"/>
    <property type="match status" value="1"/>
</dbReference>
<dbReference type="FunFam" id="3.55.40.20:FF:000004">
    <property type="entry name" value="Superoxide dismutase [Fe]"/>
    <property type="match status" value="1"/>
</dbReference>
<dbReference type="Gene3D" id="1.10.287.990">
    <property type="entry name" value="Fe,Mn superoxide dismutase (SOD) domain"/>
    <property type="match status" value="1"/>
</dbReference>
<dbReference type="Gene3D" id="3.55.40.20">
    <property type="entry name" value="Iron/manganese superoxide dismutase, C-terminal domain"/>
    <property type="match status" value="1"/>
</dbReference>
<dbReference type="InterPro" id="IPR050265">
    <property type="entry name" value="Fe/Mn_Superoxide_Dismutase"/>
</dbReference>
<dbReference type="InterPro" id="IPR001189">
    <property type="entry name" value="Mn/Fe_SOD"/>
</dbReference>
<dbReference type="InterPro" id="IPR019833">
    <property type="entry name" value="Mn/Fe_SOD_BS"/>
</dbReference>
<dbReference type="InterPro" id="IPR019832">
    <property type="entry name" value="Mn/Fe_SOD_C"/>
</dbReference>
<dbReference type="InterPro" id="IPR019831">
    <property type="entry name" value="Mn/Fe_SOD_N"/>
</dbReference>
<dbReference type="InterPro" id="IPR036324">
    <property type="entry name" value="Mn/Fe_SOD_N_sf"/>
</dbReference>
<dbReference type="InterPro" id="IPR036314">
    <property type="entry name" value="SOD_C_sf"/>
</dbReference>
<dbReference type="PANTHER" id="PTHR11404">
    <property type="entry name" value="SUPEROXIDE DISMUTASE 2"/>
    <property type="match status" value="1"/>
</dbReference>
<dbReference type="PANTHER" id="PTHR11404:SF6">
    <property type="entry name" value="SUPEROXIDE DISMUTASE [MN], MITOCHONDRIAL"/>
    <property type="match status" value="1"/>
</dbReference>
<dbReference type="Pfam" id="PF02777">
    <property type="entry name" value="Sod_Fe_C"/>
    <property type="match status" value="1"/>
</dbReference>
<dbReference type="Pfam" id="PF00081">
    <property type="entry name" value="Sod_Fe_N"/>
    <property type="match status" value="1"/>
</dbReference>
<dbReference type="PIRSF" id="PIRSF000349">
    <property type="entry name" value="SODismutase"/>
    <property type="match status" value="1"/>
</dbReference>
<dbReference type="PRINTS" id="PR01703">
    <property type="entry name" value="MNSODISMTASE"/>
</dbReference>
<dbReference type="SUPFAM" id="SSF54719">
    <property type="entry name" value="Fe,Mn superoxide dismutase (SOD), C-terminal domain"/>
    <property type="match status" value="1"/>
</dbReference>
<dbReference type="SUPFAM" id="SSF46609">
    <property type="entry name" value="Fe,Mn superoxide dismutase (SOD), N-terminal domain"/>
    <property type="match status" value="1"/>
</dbReference>
<dbReference type="PROSITE" id="PS00088">
    <property type="entry name" value="SOD_MN"/>
    <property type="match status" value="1"/>
</dbReference>
<comment type="function">
    <text evidence="1">Destroys superoxide anion radicals which are normally produced within the cells and which are toxic to biological systems. Catalyzes the dismutation of superoxide anion radicals into O2 and H2O2 by successive reduction and oxidation of the transition metal ion at the active site.</text>
</comment>
<comment type="catalytic activity">
    <reaction evidence="1">
        <text>2 superoxide + 2 H(+) = H2O2 + O2</text>
        <dbReference type="Rhea" id="RHEA:20696"/>
        <dbReference type="ChEBI" id="CHEBI:15378"/>
        <dbReference type="ChEBI" id="CHEBI:15379"/>
        <dbReference type="ChEBI" id="CHEBI:16240"/>
        <dbReference type="ChEBI" id="CHEBI:18421"/>
        <dbReference type="EC" id="1.15.1.1"/>
    </reaction>
    <physiologicalReaction direction="left-to-right" evidence="1">
        <dbReference type="Rhea" id="RHEA:20697"/>
    </physiologicalReaction>
</comment>
<comment type="cofactor">
    <cofactor evidence="1">
        <name>Mn(2+)</name>
        <dbReference type="ChEBI" id="CHEBI:29035"/>
    </cofactor>
    <cofactor evidence="1">
        <name>Fe(3+)</name>
        <dbReference type="ChEBI" id="CHEBI:29034"/>
    </cofactor>
    <text evidence="1">Binds 1 Mn(2+) or Fe(3+) ion per subunit.</text>
</comment>
<comment type="interaction">
    <interactant intactId="EBI-8549588">
        <id>Q9Y8H8</id>
    </interactant>
    <interactant intactId="EBI-8549588">
        <id>Q9Y8H8</id>
        <label>sod</label>
    </interactant>
    <organismsDiffer>false</organismsDiffer>
    <experiments>3</experiments>
</comment>
<comment type="similarity">
    <text evidence="2">Belongs to the iron/manganese superoxide dismutase family.</text>
</comment>
<name>SODF_AERPE</name>
<keyword id="KW-0002">3D-structure</keyword>
<keyword id="KW-0408">Iron</keyword>
<keyword id="KW-0464">Manganese</keyword>
<keyword id="KW-0479">Metal-binding</keyword>
<keyword id="KW-0560">Oxidoreductase</keyword>
<keyword id="KW-1185">Reference proteome</keyword>
<protein>
    <recommendedName>
        <fullName>Superoxide dismutase [Mn/Fe]</fullName>
        <ecNumber evidence="1">1.15.1.1</ecNumber>
    </recommendedName>
</protein>
<gene>
    <name type="primary">sod</name>
    <name type="ordered locus">APE_0741</name>
</gene>
<accession>Q9Y8H8</accession>
<sequence>MVSFKRYELPPLPYNYNALEPYIIEEIMKLHHQKHHNTYVKGANAALEKIEKHLKGEIQIDVRAVMRDFSFNYAGHIMHTIFWPNMAPPGKGGGTPGGRVADLIEKQFGGFEKFKALFSAAAKTVEGVGWGVLAFDPLTEELRILQVEKHNVLMTAGLVPILVIDVWEHAYYLQYKNDRGSYVENWWNVVNWDDVEKRLEQALNNAKPLYLLPQ</sequence>
<proteinExistence type="evidence at protein level"/>